<dbReference type="EC" id="4.1.1.102" evidence="1 2"/>
<dbReference type="EMBL" id="AM270061">
    <property type="protein sequence ID" value="CAK38415.1"/>
    <property type="molecule type" value="Genomic_DNA"/>
</dbReference>
<dbReference type="RefSeq" id="XP_001390534.1">
    <property type="nucleotide sequence ID" value="XM_001390497.1"/>
</dbReference>
<dbReference type="PDB" id="4ZA4">
    <property type="method" value="X-ray"/>
    <property type="resolution" value="1.22 A"/>
    <property type="chains" value="A=1-500"/>
</dbReference>
<dbReference type="PDB" id="4ZA5">
    <property type="method" value="X-ray"/>
    <property type="resolution" value="1.10 A"/>
    <property type="chains" value="A=1-500"/>
</dbReference>
<dbReference type="PDB" id="4ZA7">
    <property type="method" value="X-ray"/>
    <property type="resolution" value="1.10 A"/>
    <property type="chains" value="A=1-500"/>
</dbReference>
<dbReference type="PDB" id="4ZA8">
    <property type="method" value="X-ray"/>
    <property type="resolution" value="1.06 A"/>
    <property type="chains" value="A=1-500"/>
</dbReference>
<dbReference type="PDB" id="4ZA9">
    <property type="method" value="X-ray"/>
    <property type="resolution" value="1.01 A"/>
    <property type="chains" value="A=1-500"/>
</dbReference>
<dbReference type="PDB" id="4ZAA">
    <property type="method" value="X-ray"/>
    <property type="resolution" value="1.24 A"/>
    <property type="chains" value="A=1-500"/>
</dbReference>
<dbReference type="PDB" id="4ZAB">
    <property type="method" value="X-ray"/>
    <property type="resolution" value="1.16 A"/>
    <property type="chains" value="A=1-500"/>
</dbReference>
<dbReference type="PDB" id="6EV3">
    <property type="method" value="X-ray"/>
    <property type="resolution" value="1.30 A"/>
    <property type="chains" value="A=1-500"/>
</dbReference>
<dbReference type="PDB" id="6EV4">
    <property type="method" value="X-ray"/>
    <property type="resolution" value="1.14 A"/>
    <property type="chains" value="A=1-500"/>
</dbReference>
<dbReference type="PDB" id="6EV5">
    <property type="method" value="X-ray"/>
    <property type="resolution" value="1.28 A"/>
    <property type="chains" value="A=1-500"/>
</dbReference>
<dbReference type="PDB" id="6EV6">
    <property type="method" value="X-ray"/>
    <property type="resolution" value="1.10 A"/>
    <property type="chains" value="A=1-500"/>
</dbReference>
<dbReference type="PDB" id="6EV7">
    <property type="method" value="X-ray"/>
    <property type="resolution" value="1.06 A"/>
    <property type="chains" value="A=1-500"/>
</dbReference>
<dbReference type="PDB" id="6EV8">
    <property type="method" value="X-ray"/>
    <property type="resolution" value="1.03 A"/>
    <property type="chains" value="A=1-500"/>
</dbReference>
<dbReference type="PDB" id="6EV9">
    <property type="method" value="X-ray"/>
    <property type="resolution" value="1.64 A"/>
    <property type="chains" value="A=1-500"/>
</dbReference>
<dbReference type="PDB" id="6EVA">
    <property type="method" value="X-ray"/>
    <property type="resolution" value="1.64 A"/>
    <property type="chains" value="A=1-500"/>
</dbReference>
<dbReference type="PDB" id="6EVB">
    <property type="method" value="X-ray"/>
    <property type="resolution" value="1.13 A"/>
    <property type="chains" value="A=1-500"/>
</dbReference>
<dbReference type="PDB" id="6EVC">
    <property type="method" value="X-ray"/>
    <property type="resolution" value="1.18 A"/>
    <property type="chains" value="A=1-500"/>
</dbReference>
<dbReference type="PDB" id="6EVD">
    <property type="method" value="X-ray"/>
    <property type="resolution" value="1.19 A"/>
    <property type="chains" value="A=1-500"/>
</dbReference>
<dbReference type="PDB" id="6R2P">
    <property type="method" value="X-ray"/>
    <property type="resolution" value="1.26 A"/>
    <property type="chains" value="A=1-500"/>
</dbReference>
<dbReference type="PDB" id="6R2R">
    <property type="method" value="X-ray"/>
    <property type="resolution" value="1.13 A"/>
    <property type="chains" value="A=1-500"/>
</dbReference>
<dbReference type="PDB" id="6R2T">
    <property type="method" value="X-ray"/>
    <property type="resolution" value="1.29 A"/>
    <property type="chains" value="A=1-500"/>
</dbReference>
<dbReference type="PDB" id="6R2Z">
    <property type="method" value="X-ray"/>
    <property type="resolution" value="1.08 A"/>
    <property type="chains" value="A=1-500"/>
</dbReference>
<dbReference type="PDB" id="6R30">
    <property type="method" value="X-ray"/>
    <property type="resolution" value="1.12 A"/>
    <property type="chains" value="A=1-500"/>
</dbReference>
<dbReference type="PDB" id="6R32">
    <property type="method" value="X-ray"/>
    <property type="resolution" value="1.21 A"/>
    <property type="chains" value="A=1-500"/>
</dbReference>
<dbReference type="PDB" id="6R33">
    <property type="method" value="X-ray"/>
    <property type="resolution" value="1.01 A"/>
    <property type="chains" value="A=1-500"/>
</dbReference>
<dbReference type="PDB" id="6R34">
    <property type="method" value="X-ray"/>
    <property type="resolution" value="1.10 A"/>
    <property type="chains" value="A=1-500"/>
</dbReference>
<dbReference type="PDB" id="6R3F">
    <property type="method" value="X-ray"/>
    <property type="resolution" value="1.25 A"/>
    <property type="chains" value="A=1-500"/>
</dbReference>
<dbReference type="PDB" id="6R3G">
    <property type="method" value="X-ray"/>
    <property type="resolution" value="1.13 A"/>
    <property type="chains" value="A=1-500"/>
</dbReference>
<dbReference type="PDB" id="6R3I">
    <property type="method" value="X-ray"/>
    <property type="resolution" value="1.14 A"/>
    <property type="chains" value="A=1-500"/>
</dbReference>
<dbReference type="PDB" id="6R3J">
    <property type="method" value="X-ray"/>
    <property type="resolution" value="1.39 A"/>
    <property type="chains" value="A=1-500"/>
</dbReference>
<dbReference type="PDB" id="6R3L">
    <property type="method" value="X-ray"/>
    <property type="resolution" value="1.24 A"/>
    <property type="chains" value="A=1-500"/>
</dbReference>
<dbReference type="PDB" id="6R3N">
    <property type="method" value="X-ray"/>
    <property type="resolution" value="1.02 A"/>
    <property type="chains" value="A=1-500"/>
</dbReference>
<dbReference type="PDB" id="6R3O">
    <property type="method" value="X-ray"/>
    <property type="resolution" value="1.13 A"/>
    <property type="chains" value="A=1-500"/>
</dbReference>
<dbReference type="PDB" id="6TIH">
    <property type="method" value="X-ray"/>
    <property type="resolution" value="1.02 A"/>
    <property type="chains" value="AAA=1-500"/>
</dbReference>
<dbReference type="PDB" id="6TIJ">
    <property type="method" value="X-ray"/>
    <property type="resolution" value="1.12 A"/>
    <property type="chains" value="AAA=1-500"/>
</dbReference>
<dbReference type="PDB" id="6TIL">
    <property type="method" value="X-ray"/>
    <property type="resolution" value="1.42 A"/>
    <property type="chains" value="AAA=1-500"/>
</dbReference>
<dbReference type="PDB" id="6TIN">
    <property type="method" value="X-ray"/>
    <property type="resolution" value="1.28 A"/>
    <property type="chains" value="AAA=1-500"/>
</dbReference>
<dbReference type="PDB" id="6TIO">
    <property type="method" value="X-ray"/>
    <property type="resolution" value="1.54 A"/>
    <property type="chains" value="AAA=1-500"/>
</dbReference>
<dbReference type="PDB" id="7NF3">
    <property type="method" value="X-ray"/>
    <property type="resolution" value="1.10 A"/>
    <property type="chains" value="A=1-500"/>
</dbReference>
<dbReference type="PDB" id="7NF4">
    <property type="method" value="X-ray"/>
    <property type="resolution" value="1.69 A"/>
    <property type="chains" value="A/B=1-500"/>
</dbReference>
<dbReference type="PDB" id="8CRD">
    <property type="method" value="X-ray"/>
    <property type="resolution" value="1.35 A"/>
    <property type="chains" value="A=1-500"/>
</dbReference>
<dbReference type="PDB" id="8OED">
    <property type="method" value="X-ray"/>
    <property type="resolution" value="1.37 A"/>
    <property type="chains" value="A=1-500"/>
</dbReference>
<dbReference type="PDB" id="8OEH">
    <property type="method" value="X-ray"/>
    <property type="resolution" value="1.77 A"/>
    <property type="chains" value="A=1-500"/>
</dbReference>
<dbReference type="PDB" id="8OEO">
    <property type="method" value="X-ray"/>
    <property type="resolution" value="1.30 A"/>
    <property type="chains" value="A=1-500"/>
</dbReference>
<dbReference type="PDBsum" id="4ZA4"/>
<dbReference type="PDBsum" id="4ZA5"/>
<dbReference type="PDBsum" id="4ZA7"/>
<dbReference type="PDBsum" id="4ZA8"/>
<dbReference type="PDBsum" id="4ZA9"/>
<dbReference type="PDBsum" id="4ZAA"/>
<dbReference type="PDBsum" id="4ZAB"/>
<dbReference type="PDBsum" id="6EV3"/>
<dbReference type="PDBsum" id="6EV4"/>
<dbReference type="PDBsum" id="6EV5"/>
<dbReference type="PDBsum" id="6EV6"/>
<dbReference type="PDBsum" id="6EV7"/>
<dbReference type="PDBsum" id="6EV8"/>
<dbReference type="PDBsum" id="6EV9"/>
<dbReference type="PDBsum" id="6EVA"/>
<dbReference type="PDBsum" id="6EVB"/>
<dbReference type="PDBsum" id="6EVC"/>
<dbReference type="PDBsum" id="6EVD"/>
<dbReference type="PDBsum" id="6R2P"/>
<dbReference type="PDBsum" id="6R2R"/>
<dbReference type="PDBsum" id="6R2T"/>
<dbReference type="PDBsum" id="6R2Z"/>
<dbReference type="PDBsum" id="6R30"/>
<dbReference type="PDBsum" id="6R32"/>
<dbReference type="PDBsum" id="6R33"/>
<dbReference type="PDBsum" id="6R34"/>
<dbReference type="PDBsum" id="6R3F"/>
<dbReference type="PDBsum" id="6R3G"/>
<dbReference type="PDBsum" id="6R3I"/>
<dbReference type="PDBsum" id="6R3J"/>
<dbReference type="PDBsum" id="6R3L"/>
<dbReference type="PDBsum" id="6R3N"/>
<dbReference type="PDBsum" id="6R3O"/>
<dbReference type="PDBsum" id="6TIH"/>
<dbReference type="PDBsum" id="6TIJ"/>
<dbReference type="PDBsum" id="6TIL"/>
<dbReference type="PDBsum" id="6TIN"/>
<dbReference type="PDBsum" id="6TIO"/>
<dbReference type="PDBsum" id="7NF3"/>
<dbReference type="PDBsum" id="7NF4"/>
<dbReference type="PDBsum" id="8CRD"/>
<dbReference type="PDBsum" id="8OED"/>
<dbReference type="PDBsum" id="8OEH"/>
<dbReference type="PDBsum" id="8OEO"/>
<dbReference type="SMR" id="A2QHE5"/>
<dbReference type="DIP" id="DIP-61587N"/>
<dbReference type="EnsemblFungi" id="CAK38415">
    <property type="protein sequence ID" value="CAK38415"/>
    <property type="gene ID" value="An03g06590"/>
</dbReference>
<dbReference type="GeneID" id="4980646"/>
<dbReference type="KEGG" id="ang:An03g06590"/>
<dbReference type="VEuPathDB" id="FungiDB:An03g06590"/>
<dbReference type="HOGENOM" id="CLU_023348_0_0_1"/>
<dbReference type="EvolutionaryTrace" id="A2QHE5"/>
<dbReference type="Proteomes" id="UP000006706">
    <property type="component" value="Chromosome 6R"/>
</dbReference>
<dbReference type="GO" id="GO:0005737">
    <property type="term" value="C:cytoplasm"/>
    <property type="evidence" value="ECO:0007669"/>
    <property type="project" value="UniProtKB-SubCell"/>
</dbReference>
<dbReference type="GO" id="GO:0016831">
    <property type="term" value="F:carboxy-lyase activity"/>
    <property type="evidence" value="ECO:0007669"/>
    <property type="project" value="UniProtKB-UniRule"/>
</dbReference>
<dbReference type="GO" id="GO:0042802">
    <property type="term" value="F:identical protein binding"/>
    <property type="evidence" value="ECO:0000353"/>
    <property type="project" value="IntAct"/>
</dbReference>
<dbReference type="GO" id="GO:0030145">
    <property type="term" value="F:manganese ion binding"/>
    <property type="evidence" value="ECO:0000314"/>
    <property type="project" value="UniProtKB"/>
</dbReference>
<dbReference type="GO" id="GO:0009074">
    <property type="term" value="P:aromatic amino acid family catabolic process"/>
    <property type="evidence" value="ECO:0000314"/>
    <property type="project" value="UniProtKB"/>
</dbReference>
<dbReference type="GO" id="GO:0046281">
    <property type="term" value="P:cinnamic acid catabolic process"/>
    <property type="evidence" value="ECO:0007669"/>
    <property type="project" value="UniProtKB-UniRule"/>
</dbReference>
<dbReference type="GO" id="GO:0033494">
    <property type="term" value="P:ferulate metabolic process"/>
    <property type="evidence" value="ECO:0007669"/>
    <property type="project" value="UniProtKB-UniRule"/>
</dbReference>
<dbReference type="GO" id="GO:0018966">
    <property type="term" value="P:styrene metabolic process"/>
    <property type="evidence" value="ECO:0000314"/>
    <property type="project" value="UniProtKB"/>
</dbReference>
<dbReference type="FunFam" id="1.20.5.4570:FF:000001">
    <property type="entry name" value="Ferulic acid decarboxylase 1"/>
    <property type="match status" value="1"/>
</dbReference>
<dbReference type="FunFam" id="3.40.1670.10:FF:000004">
    <property type="entry name" value="Ferulic acid decarboxylase 1"/>
    <property type="match status" value="1"/>
</dbReference>
<dbReference type="Gene3D" id="1.20.5.4570">
    <property type="match status" value="1"/>
</dbReference>
<dbReference type="Gene3D" id="3.40.1670.10">
    <property type="entry name" value="UbiD C-terminal domain-like"/>
    <property type="match status" value="1"/>
</dbReference>
<dbReference type="HAMAP" id="MF_01983">
    <property type="entry name" value="UbiD_FDC"/>
    <property type="match status" value="1"/>
</dbReference>
<dbReference type="InterPro" id="IPR032903">
    <property type="entry name" value="FDC-like"/>
</dbReference>
<dbReference type="InterPro" id="IPR002830">
    <property type="entry name" value="UbiD"/>
</dbReference>
<dbReference type="InterPro" id="IPR049381">
    <property type="entry name" value="UbiD-like_C"/>
</dbReference>
<dbReference type="InterPro" id="IPR049383">
    <property type="entry name" value="UbiD-like_N"/>
</dbReference>
<dbReference type="InterPro" id="IPR048304">
    <property type="entry name" value="UbiD_Rift_dom"/>
</dbReference>
<dbReference type="NCBIfam" id="TIGR00148">
    <property type="entry name" value="UbiD family decarboxylase"/>
    <property type="match status" value="1"/>
</dbReference>
<dbReference type="PANTHER" id="PTHR30108">
    <property type="entry name" value="3-OCTAPRENYL-4-HYDROXYBENZOATE CARBOXY-LYASE-RELATED"/>
    <property type="match status" value="1"/>
</dbReference>
<dbReference type="PANTHER" id="PTHR30108:SF17">
    <property type="entry name" value="FERULIC ACID DECARBOXYLASE 1"/>
    <property type="match status" value="1"/>
</dbReference>
<dbReference type="Pfam" id="PF01977">
    <property type="entry name" value="UbiD"/>
    <property type="match status" value="1"/>
</dbReference>
<dbReference type="Pfam" id="PF20696">
    <property type="entry name" value="UbiD_C"/>
    <property type="match status" value="1"/>
</dbReference>
<dbReference type="Pfam" id="PF20695">
    <property type="entry name" value="UbiD_N"/>
    <property type="match status" value="1"/>
</dbReference>
<dbReference type="SUPFAM" id="SSF50475">
    <property type="entry name" value="FMN-binding split barrel"/>
    <property type="match status" value="1"/>
</dbReference>
<dbReference type="SUPFAM" id="SSF143968">
    <property type="entry name" value="UbiD C-terminal domain-like"/>
    <property type="match status" value="1"/>
</dbReference>
<name>FDC1_ASPNC</name>
<evidence type="ECO:0000255" key="1">
    <source>
        <dbReference type="HAMAP-Rule" id="MF_03196"/>
    </source>
</evidence>
<evidence type="ECO:0000269" key="2">
    <source>
    </source>
</evidence>
<evidence type="ECO:0000269" key="3">
    <source>
    </source>
</evidence>
<evidence type="ECO:0000303" key="4">
    <source>
    </source>
</evidence>
<evidence type="ECO:0000305" key="5">
    <source>
    </source>
</evidence>
<evidence type="ECO:0007829" key="6">
    <source>
        <dbReference type="PDB" id="4ZA9"/>
    </source>
</evidence>
<evidence type="ECO:0007829" key="7">
    <source>
        <dbReference type="PDB" id="6EV5"/>
    </source>
</evidence>
<evidence type="ECO:0007829" key="8">
    <source>
        <dbReference type="PDB" id="7NF4"/>
    </source>
</evidence>
<sequence>MSAQPAHLCFRSFVEALKVDNDLVEINTPIDPNLEAAAITRRVCETNDKAPLFNNLIGMKNGLFRILGAPGSLRKSSADRYGRLARHLALPPTASMREILDKMLSASDMPPIPPTIVPTGPCKENSLDDSEFDLTELPVPLIHKSDGGKYIQTYGMHIVQSPDGTWTNWSIARAMVHDKNHLTGLVIPPQHIWQIHQMWKKEGRSDVPWALAFGVPPAAIMASSMPIPDGVTEAGYVGAMTGSSLELVKCDTNDLYVPATSEIVLEGTLSISETGPEGPFGEMHGYIFPGDTHLGAKYKVNRITYRNNAIMPMSSCGRLTDETHTMIGSLAAAEIRKLCQQNDLPITDAFAPFESQVTWVALRVDTEKLRAMKTTSEGFRKRVGDVVFNHKAGYTIHRLVLVGDDIDVYEGKDVLWAFSTRCRPGMDETLFEDVRGFPLIPYMGHGNGPAHRGGKVVSDALMPTEYTTGRNWEAADFNQSYPEDLKQKVLDNWTKMGFSN</sequence>
<protein>
    <recommendedName>
        <fullName evidence="1 4">Ferulic acid decarboxylase 1</fullName>
        <ecNumber evidence="1 2">4.1.1.102</ecNumber>
    </recommendedName>
    <alternativeName>
        <fullName evidence="1">Phenacrylate decarboxylase</fullName>
    </alternativeName>
</protein>
<organism>
    <name type="scientific">Aspergillus niger (strain ATCC MYA-4892 / CBS 513.88 / FGSC A1513)</name>
    <dbReference type="NCBI Taxonomy" id="425011"/>
    <lineage>
        <taxon>Eukaryota</taxon>
        <taxon>Fungi</taxon>
        <taxon>Dikarya</taxon>
        <taxon>Ascomycota</taxon>
        <taxon>Pezizomycotina</taxon>
        <taxon>Eurotiomycetes</taxon>
        <taxon>Eurotiomycetidae</taxon>
        <taxon>Eurotiales</taxon>
        <taxon>Aspergillaceae</taxon>
        <taxon>Aspergillus</taxon>
        <taxon>Aspergillus subgen. Circumdati</taxon>
    </lineage>
</organism>
<feature type="chain" id="PRO_0000434529" description="Ferulic acid decarboxylase 1">
    <location>
        <begin position="1"/>
        <end position="500"/>
    </location>
</feature>
<feature type="active site" description="Proton donor" evidence="1 5">
    <location>
        <position position="282"/>
    </location>
</feature>
<feature type="binding site" evidence="1 3">
    <location>
        <begin position="168"/>
        <end position="173"/>
    </location>
    <ligand>
        <name>prenylated FMN</name>
        <dbReference type="ChEBI" id="CHEBI:87746"/>
    </ligand>
</feature>
<feature type="binding site" evidence="1 3">
    <location>
        <position position="168"/>
    </location>
    <ligand>
        <name>Mn(2+)</name>
        <dbReference type="ChEBI" id="CHEBI:29035"/>
    </ligand>
</feature>
<feature type="binding site" evidence="1 3">
    <location>
        <begin position="190"/>
        <end position="191"/>
    </location>
    <ligand>
        <name>prenylated FMN</name>
        <dbReference type="ChEBI" id="CHEBI:87746"/>
    </ligand>
</feature>
<feature type="binding site" evidence="1 3">
    <location>
        <position position="191"/>
    </location>
    <ligand>
        <name>Mn(2+)</name>
        <dbReference type="ChEBI" id="CHEBI:29035"/>
    </ligand>
</feature>
<feature type="binding site" evidence="1 3">
    <location>
        <position position="233"/>
    </location>
    <ligand>
        <name>Mn(2+)</name>
        <dbReference type="ChEBI" id="CHEBI:29035"/>
    </ligand>
</feature>
<feature type="binding site" evidence="1">
    <location>
        <position position="233"/>
    </location>
    <ligand>
        <name>prenylated FMN</name>
        <dbReference type="ChEBI" id="CHEBI:87746"/>
    </ligand>
</feature>
<feature type="binding site" evidence="1 3">
    <location>
        <position position="391"/>
    </location>
    <ligand>
        <name>prenylated FMN</name>
        <dbReference type="ChEBI" id="CHEBI:87746"/>
    </ligand>
</feature>
<feature type="mutagenesis site" description="Abolishes catalytic activity." evidence="3">
    <original>R</original>
    <variation>A</variation>
    <location>
        <position position="173"/>
    </location>
</feature>
<feature type="mutagenesis site" description="Abolishes catalytic activity." evidence="3">
    <original>E</original>
    <variation>Q</variation>
    <location>
        <position position="277"/>
    </location>
</feature>
<feature type="mutagenesis site" description="Abolishes catalytic activity." evidence="3">
    <original>E</original>
    <variation>Q</variation>
    <location>
        <position position="282"/>
    </location>
</feature>
<feature type="helix" evidence="6">
    <location>
        <begin position="6"/>
        <end position="8"/>
    </location>
</feature>
<feature type="helix" evidence="6">
    <location>
        <begin position="10"/>
        <end position="19"/>
    </location>
</feature>
<feature type="strand" evidence="6">
    <location>
        <begin position="23"/>
        <end position="26"/>
    </location>
</feature>
<feature type="helix" evidence="6">
    <location>
        <begin position="35"/>
        <end position="46"/>
    </location>
</feature>
<feature type="strand" evidence="6">
    <location>
        <begin position="50"/>
        <end position="56"/>
    </location>
</feature>
<feature type="strand" evidence="6">
    <location>
        <begin position="65"/>
        <end position="68"/>
    </location>
</feature>
<feature type="strand" evidence="6">
    <location>
        <begin position="75"/>
        <end position="77"/>
    </location>
</feature>
<feature type="turn" evidence="6">
    <location>
        <begin position="78"/>
        <end position="81"/>
    </location>
</feature>
<feature type="helix" evidence="6">
    <location>
        <begin position="82"/>
        <end position="85"/>
    </location>
</feature>
<feature type="turn" evidence="6">
    <location>
        <begin position="86"/>
        <end position="89"/>
    </location>
</feature>
<feature type="helix" evidence="6">
    <location>
        <begin position="96"/>
        <end position="104"/>
    </location>
</feature>
<feature type="helix" evidence="6">
    <location>
        <begin position="105"/>
        <end position="108"/>
    </location>
</feature>
<feature type="helix" evidence="6">
    <location>
        <begin position="121"/>
        <end position="123"/>
    </location>
</feature>
<feature type="strand" evidence="6">
    <location>
        <begin position="124"/>
        <end position="127"/>
    </location>
</feature>
<feature type="turn" evidence="6">
    <location>
        <begin position="129"/>
        <end position="131"/>
    </location>
</feature>
<feature type="helix" evidence="6">
    <location>
        <begin position="134"/>
        <end position="136"/>
    </location>
</feature>
<feature type="strand" evidence="6">
    <location>
        <begin position="152"/>
        <end position="154"/>
    </location>
</feature>
<feature type="strand" evidence="6">
    <location>
        <begin position="156"/>
        <end position="160"/>
    </location>
</feature>
<feature type="strand" evidence="6">
    <location>
        <begin position="167"/>
        <end position="170"/>
    </location>
</feature>
<feature type="strand" evidence="6">
    <location>
        <begin position="174"/>
        <end position="178"/>
    </location>
</feature>
<feature type="strand" evidence="6">
    <location>
        <begin position="181"/>
        <end position="184"/>
    </location>
</feature>
<feature type="helix" evidence="6">
    <location>
        <begin position="191"/>
        <end position="202"/>
    </location>
</feature>
<feature type="strand" evidence="6">
    <location>
        <begin position="207"/>
        <end position="214"/>
    </location>
</feature>
<feature type="helix" evidence="6">
    <location>
        <begin position="217"/>
        <end position="223"/>
    </location>
</feature>
<feature type="helix" evidence="6">
    <location>
        <begin position="233"/>
        <end position="241"/>
    </location>
</feature>
<feature type="strand" evidence="6">
    <location>
        <begin position="246"/>
        <end position="249"/>
    </location>
</feature>
<feature type="strand" evidence="6">
    <location>
        <begin position="251"/>
        <end position="254"/>
    </location>
</feature>
<feature type="strand" evidence="6">
    <location>
        <begin position="256"/>
        <end position="258"/>
    </location>
</feature>
<feature type="strand" evidence="6">
    <location>
        <begin position="262"/>
        <end position="277"/>
    </location>
</feature>
<feature type="strand" evidence="8">
    <location>
        <begin position="285"/>
        <end position="287"/>
    </location>
</feature>
<feature type="strand" evidence="6">
    <location>
        <begin position="293"/>
        <end position="305"/>
    </location>
</feature>
<feature type="strand" evidence="6">
    <location>
        <begin position="310"/>
        <end position="313"/>
    </location>
</feature>
<feature type="strand" evidence="6">
    <location>
        <begin position="317"/>
        <end position="321"/>
    </location>
</feature>
<feature type="helix" evidence="6">
    <location>
        <begin position="322"/>
        <end position="325"/>
    </location>
</feature>
<feature type="helix" evidence="6">
    <location>
        <begin position="327"/>
        <end position="341"/>
    </location>
</feature>
<feature type="strand" evidence="6">
    <location>
        <begin position="346"/>
        <end position="350"/>
    </location>
</feature>
<feature type="helix" evidence="6">
    <location>
        <begin position="353"/>
        <end position="355"/>
    </location>
</feature>
<feature type="strand" evidence="6">
    <location>
        <begin position="359"/>
        <end position="364"/>
    </location>
</feature>
<feature type="helix" evidence="6">
    <location>
        <begin position="366"/>
        <end position="372"/>
    </location>
</feature>
<feature type="helix" evidence="6">
    <location>
        <begin position="376"/>
        <end position="388"/>
    </location>
</feature>
<feature type="helix" evidence="6">
    <location>
        <begin position="391"/>
        <end position="393"/>
    </location>
</feature>
<feature type="strand" evidence="6">
    <location>
        <begin position="398"/>
        <end position="402"/>
    </location>
</feature>
<feature type="helix" evidence="6">
    <location>
        <begin position="411"/>
        <end position="421"/>
    </location>
</feature>
<feature type="turn" evidence="6">
    <location>
        <begin position="424"/>
        <end position="427"/>
    </location>
</feature>
<feature type="strand" evidence="6">
    <location>
        <begin position="428"/>
        <end position="431"/>
    </location>
</feature>
<feature type="strand" evidence="6">
    <location>
        <begin position="433"/>
        <end position="435"/>
    </location>
</feature>
<feature type="helix" evidence="6">
    <location>
        <begin position="441"/>
        <end position="444"/>
    </location>
</feature>
<feature type="strand" evidence="6">
    <location>
        <begin position="446"/>
        <end position="448"/>
    </location>
</feature>
<feature type="strand" evidence="7">
    <location>
        <begin position="450"/>
        <end position="452"/>
    </location>
</feature>
<feature type="strand" evidence="6">
    <location>
        <begin position="455"/>
        <end position="459"/>
    </location>
</feature>
<feature type="helix" evidence="6">
    <location>
        <begin position="463"/>
        <end position="466"/>
    </location>
</feature>
<feature type="strand" evidence="8">
    <location>
        <begin position="473"/>
        <end position="476"/>
    </location>
</feature>
<feature type="helix" evidence="6">
    <location>
        <begin position="477"/>
        <end position="480"/>
    </location>
</feature>
<feature type="helix" evidence="6">
    <location>
        <begin position="483"/>
        <end position="496"/>
    </location>
</feature>
<keyword id="KW-0002">3D-structure</keyword>
<keyword id="KW-0963">Cytoplasm</keyword>
<keyword id="KW-0210">Decarboxylase</keyword>
<keyword id="KW-0285">Flavoprotein</keyword>
<keyword id="KW-0288">FMN</keyword>
<keyword id="KW-0456">Lyase</keyword>
<keyword id="KW-0464">Manganese</keyword>
<keyword id="KW-0479">Metal-binding</keyword>
<keyword id="KW-1185">Reference proteome</keyword>
<proteinExistence type="evidence at protein level"/>
<accession>A2QHE5</accession>
<comment type="function">
    <text evidence="1 3">Catalyzes the reversible decarboxylation of aromatic carboxylic acids like ferulic acid, p-coumaric acid or cinnamic acid, producing the corresponding vinyl derivatives 4-vinylphenol, 4-vinylguaiacol, and styrene, respectively, which play the role of aroma metabolites.</text>
</comment>
<comment type="catalytic activity">
    <reaction evidence="1">
        <text>(E)-4-coumarate + H(+) = 4-vinylphenol + CO2</text>
        <dbReference type="Rhea" id="RHEA:33227"/>
        <dbReference type="ChEBI" id="CHEBI:1883"/>
        <dbReference type="ChEBI" id="CHEBI:12876"/>
        <dbReference type="ChEBI" id="CHEBI:15378"/>
        <dbReference type="ChEBI" id="CHEBI:16526"/>
        <dbReference type="EC" id="4.1.1.102"/>
    </reaction>
</comment>
<comment type="catalytic activity">
    <reaction evidence="1 2">
        <text>(E)-cinnamate + H(+) = styrene + CO2</text>
        <dbReference type="Rhea" id="RHEA:46920"/>
        <dbReference type="ChEBI" id="CHEBI:15378"/>
        <dbReference type="ChEBI" id="CHEBI:15669"/>
        <dbReference type="ChEBI" id="CHEBI:16526"/>
        <dbReference type="ChEBI" id="CHEBI:27452"/>
        <dbReference type="EC" id="4.1.1.102"/>
    </reaction>
</comment>
<comment type="catalytic activity">
    <reaction evidence="1">
        <text>(E)-ferulate + H(+) = 2-methoxy-4-vinylphenol + CO2</text>
        <dbReference type="Rhea" id="RHEA:33807"/>
        <dbReference type="ChEBI" id="CHEBI:15378"/>
        <dbReference type="ChEBI" id="CHEBI:16526"/>
        <dbReference type="ChEBI" id="CHEBI:29749"/>
        <dbReference type="ChEBI" id="CHEBI:42438"/>
        <dbReference type="EC" id="4.1.1.102"/>
    </reaction>
</comment>
<comment type="cofactor">
    <cofactor evidence="1 3">
        <name>Mn(2+)</name>
        <dbReference type="ChEBI" id="CHEBI:29035"/>
    </cofactor>
</comment>
<comment type="cofactor">
    <cofactor evidence="1 2 3">
        <name>prenylated FMN</name>
        <dbReference type="ChEBI" id="CHEBI:87746"/>
    </cofactor>
    <text evidence="1 3">Binds 1 prenylated FMN per subunit.</text>
</comment>
<comment type="subunit">
    <text evidence="1">Homodimer. May form higher order oligomers.</text>
</comment>
<comment type="interaction">
    <interactant intactId="EBI-16161677">
        <id>A2QHE5</id>
    </interactant>
    <interactant intactId="EBI-16161677">
        <id>A2QHE5</id>
        <label>fdc1</label>
    </interactant>
    <organismsDiffer>false</organismsDiffer>
    <experiments>2</experiments>
</comment>
<comment type="subcellular location">
    <subcellularLocation>
        <location evidence="1">Cytoplasm</location>
    </subcellularLocation>
</comment>
<comment type="similarity">
    <text evidence="1">Belongs to the UbiD family. UbiD-like/FDC subfamily.</text>
</comment>
<gene>
    <name evidence="1" type="primary">fdc1</name>
    <name type="ORF">An03g06590</name>
</gene>
<reference key="1">
    <citation type="journal article" date="2007" name="Nat. Biotechnol.">
        <title>Genome sequencing and analysis of the versatile cell factory Aspergillus niger CBS 513.88.</title>
        <authorList>
            <person name="Pel H.J."/>
            <person name="de Winde J.H."/>
            <person name="Archer D.B."/>
            <person name="Dyer P.S."/>
            <person name="Hofmann G."/>
            <person name="Schaap P.J."/>
            <person name="Turner G."/>
            <person name="de Vries R.P."/>
            <person name="Albang R."/>
            <person name="Albermann K."/>
            <person name="Andersen M.R."/>
            <person name="Bendtsen J.D."/>
            <person name="Benen J.A.E."/>
            <person name="van den Berg M."/>
            <person name="Breestraat S."/>
            <person name="Caddick M.X."/>
            <person name="Contreras R."/>
            <person name="Cornell M."/>
            <person name="Coutinho P.M."/>
            <person name="Danchin E.G.J."/>
            <person name="Debets A.J.M."/>
            <person name="Dekker P."/>
            <person name="van Dijck P.W.M."/>
            <person name="van Dijk A."/>
            <person name="Dijkhuizen L."/>
            <person name="Driessen A.J.M."/>
            <person name="d'Enfert C."/>
            <person name="Geysens S."/>
            <person name="Goosen C."/>
            <person name="Groot G.S.P."/>
            <person name="de Groot P.W.J."/>
            <person name="Guillemette T."/>
            <person name="Henrissat B."/>
            <person name="Herweijer M."/>
            <person name="van den Hombergh J.P.T.W."/>
            <person name="van den Hondel C.A.M.J.J."/>
            <person name="van der Heijden R.T.J.M."/>
            <person name="van der Kaaij R.M."/>
            <person name="Klis F.M."/>
            <person name="Kools H.J."/>
            <person name="Kubicek C.P."/>
            <person name="van Kuyk P.A."/>
            <person name="Lauber J."/>
            <person name="Lu X."/>
            <person name="van der Maarel M.J.E.C."/>
            <person name="Meulenberg R."/>
            <person name="Menke H."/>
            <person name="Mortimer M.A."/>
            <person name="Nielsen J."/>
            <person name="Oliver S.G."/>
            <person name="Olsthoorn M."/>
            <person name="Pal K."/>
            <person name="van Peij N.N.M.E."/>
            <person name="Ram A.F.J."/>
            <person name="Rinas U."/>
            <person name="Roubos J.A."/>
            <person name="Sagt C.M.J."/>
            <person name="Schmoll M."/>
            <person name="Sun J."/>
            <person name="Ussery D."/>
            <person name="Varga J."/>
            <person name="Vervecken W."/>
            <person name="van de Vondervoort P.J.J."/>
            <person name="Wedler H."/>
            <person name="Woesten H.A.B."/>
            <person name="Zeng A.-P."/>
            <person name="van Ooyen A.J.J."/>
            <person name="Visser J."/>
            <person name="Stam H."/>
        </authorList>
    </citation>
    <scope>NUCLEOTIDE SEQUENCE [LARGE SCALE GENOMIC DNA]</scope>
    <source>
        <strain>ATCC MYA-4892 / CBS 513.88 / FGSC A1513</strain>
    </source>
</reference>
<reference key="2">
    <citation type="journal article" date="2015" name="Nature">
        <title>UbiX is a flavin prenyltransferase required for bacterial ubiquinone biosynthesis.</title>
        <authorList>
            <person name="White M.D."/>
            <person name="Payne K.A."/>
            <person name="Fisher K."/>
            <person name="Marshall S.A."/>
            <person name="Parker D."/>
            <person name="Rattray N.J."/>
            <person name="Trivedi D.K."/>
            <person name="Goodacre R."/>
            <person name="Rigby S.E."/>
            <person name="Scrutton N.S."/>
            <person name="Hay S."/>
            <person name="Leys D."/>
        </authorList>
    </citation>
    <scope>CATALYTIC ACTIVITY</scope>
    <scope>COFACTOR</scope>
</reference>
<reference key="3">
    <citation type="journal article" date="2015" name="Nature">
        <title>New cofactor supports alpha,beta-unsaturated acid decarboxylation via 1,3-dipolar cycloaddition.</title>
        <authorList>
            <person name="Payne K.A."/>
            <person name="White M.D."/>
            <person name="Fisher K."/>
            <person name="Khara B."/>
            <person name="Bailey S.S."/>
            <person name="Parker D."/>
            <person name="Rattray N.J."/>
            <person name="Trivedi D.K."/>
            <person name="Goodacre R."/>
            <person name="Beveridge R."/>
            <person name="Barran P."/>
            <person name="Rigby S.E."/>
            <person name="Scrutton N.S."/>
            <person name="Hay S."/>
            <person name="Leys D."/>
        </authorList>
    </citation>
    <scope>X-RAY CRYSTALLOGRAPHY (1.01 ANGSTROMS) IN COMPLEX WITH PRFMN AND MANGANESE</scope>
    <scope>FUNCTION</scope>
    <scope>ACTIVE SITE</scope>
    <scope>MUTAGENESIS OF ARG-173; GLU-277 AND GLU-282</scope>
</reference>